<evidence type="ECO:0000255" key="1">
    <source>
        <dbReference type="HAMAP-Rule" id="MF_01381"/>
    </source>
</evidence>
<evidence type="ECO:0000305" key="2"/>
<comment type="function">
    <text evidence="1">Murein-degrading enzyme. May play a role in recycling of muropeptides during cell elongation and/or cell division. Preferentially cleaves at a distance of more than two disaccharide units from the ends of the glycan chain.</text>
</comment>
<comment type="catalytic activity">
    <reaction evidence="1">
        <text>Endolytic cleavage of the (1-&gt;4)-beta-glycosidic linkage between N-acetylmuramic acid (MurNAc) and N-acetylglucosamine (GlcNAc) residues in peptidoglycan with concomitant formation of a 1,6-anhydrobond in the MurNAc residue.</text>
        <dbReference type="EC" id="4.2.2.n2"/>
    </reaction>
</comment>
<comment type="subcellular location">
    <subcellularLocation>
        <location evidence="1">Cell outer membrane</location>
        <topology evidence="1">Lipid-anchor</topology>
    </subcellularLocation>
</comment>
<comment type="similarity">
    <text evidence="1">Belongs to the transglycosylase Slt family.</text>
</comment>
<comment type="sequence caution" evidence="2">
    <conflict type="erroneous initiation">
        <sequence resource="EMBL-CDS" id="ABR77731"/>
    </conflict>
</comment>
<protein>
    <recommendedName>
        <fullName evidence="1">Endo-type membrane-bound lytic murein transglycosylase A</fullName>
        <ecNumber evidence="1">4.2.2.n2</ecNumber>
    </recommendedName>
    <alternativeName>
        <fullName evidence="1">Peptidoglycan lytic endotransglycosylase</fullName>
    </alternativeName>
</protein>
<keyword id="KW-0998">Cell outer membrane</keyword>
<keyword id="KW-0961">Cell wall biogenesis/degradation</keyword>
<keyword id="KW-0449">Lipoprotein</keyword>
<keyword id="KW-0456">Lyase</keyword>
<keyword id="KW-0472">Membrane</keyword>
<keyword id="KW-0564">Palmitate</keyword>
<keyword id="KW-0732">Signal</keyword>
<sequence>MKLRWLLILVVFLAGCSSKHDYTNPPWNPEVPVKRAMQWMPISEKAGAAWGVDPQLITAIIAIESGGNPAVVSKSGAVGLMQLKPSTSGRDVYRRMGWRGEPSVSELKNPERNISMGAAYLSILENGPLAGIKDPQVMRYAVVVSYANGAGALLRTFSSNRQDAIEEINDLDADEFFEHVVKKHPAPQAPRYIWKLQKALDAM</sequence>
<organism>
    <name type="scientific">Klebsiella pneumoniae subsp. pneumoniae (strain ATCC 700721 / MGH 78578)</name>
    <dbReference type="NCBI Taxonomy" id="272620"/>
    <lineage>
        <taxon>Bacteria</taxon>
        <taxon>Pseudomonadati</taxon>
        <taxon>Pseudomonadota</taxon>
        <taxon>Gammaproteobacteria</taxon>
        <taxon>Enterobacterales</taxon>
        <taxon>Enterobacteriaceae</taxon>
        <taxon>Klebsiella/Raoultella group</taxon>
        <taxon>Klebsiella</taxon>
        <taxon>Klebsiella pneumoniae complex</taxon>
    </lineage>
</organism>
<reference key="1">
    <citation type="submission" date="2006-09" db="EMBL/GenBank/DDBJ databases">
        <authorList>
            <consortium name="The Klebsiella pneumonia Genome Sequencing Project"/>
            <person name="McClelland M."/>
            <person name="Sanderson E.K."/>
            <person name="Spieth J."/>
            <person name="Clifton W.S."/>
            <person name="Latreille P."/>
            <person name="Sabo A."/>
            <person name="Pepin K."/>
            <person name="Bhonagiri V."/>
            <person name="Porwollik S."/>
            <person name="Ali J."/>
            <person name="Wilson R.K."/>
        </authorList>
    </citation>
    <scope>NUCLEOTIDE SEQUENCE [LARGE SCALE GENOMIC DNA]</scope>
    <source>
        <strain>ATCC 700721 / MGH 78578</strain>
    </source>
</reference>
<dbReference type="EC" id="4.2.2.n2" evidence="1"/>
<dbReference type="EMBL" id="CP000647">
    <property type="protein sequence ID" value="ABR77731.1"/>
    <property type="status" value="ALT_INIT"/>
    <property type="molecule type" value="Genomic_DNA"/>
</dbReference>
<dbReference type="RefSeq" id="WP_002910846.1">
    <property type="nucleotide sequence ID" value="NC_009648.1"/>
</dbReference>
<dbReference type="SMR" id="A6TAW0"/>
<dbReference type="STRING" id="272620.KPN_02305"/>
<dbReference type="CAZy" id="GH23">
    <property type="family name" value="Glycoside Hydrolase Family 23"/>
</dbReference>
<dbReference type="PaxDb" id="272620-KPN_02305"/>
<dbReference type="EnsemblBacteria" id="ABR77731">
    <property type="protein sequence ID" value="ABR77731"/>
    <property type="gene ID" value="KPN_02305"/>
</dbReference>
<dbReference type="KEGG" id="kpn:KPN_02305"/>
<dbReference type="HOGENOM" id="CLU_103257_0_0_6"/>
<dbReference type="Proteomes" id="UP000000265">
    <property type="component" value="Chromosome"/>
</dbReference>
<dbReference type="GO" id="GO:0009279">
    <property type="term" value="C:cell outer membrane"/>
    <property type="evidence" value="ECO:0007669"/>
    <property type="project" value="UniProtKB-SubCell"/>
</dbReference>
<dbReference type="GO" id="GO:0008932">
    <property type="term" value="F:lytic endotransglycosylase activity"/>
    <property type="evidence" value="ECO:0007669"/>
    <property type="project" value="InterPro"/>
</dbReference>
<dbReference type="GO" id="GO:0016998">
    <property type="term" value="P:cell wall macromolecule catabolic process"/>
    <property type="evidence" value="ECO:0007669"/>
    <property type="project" value="UniProtKB-UniRule"/>
</dbReference>
<dbReference type="GO" id="GO:0071555">
    <property type="term" value="P:cell wall organization"/>
    <property type="evidence" value="ECO:0007669"/>
    <property type="project" value="UniProtKB-KW"/>
</dbReference>
<dbReference type="GO" id="GO:0000270">
    <property type="term" value="P:peptidoglycan metabolic process"/>
    <property type="evidence" value="ECO:0007669"/>
    <property type="project" value="InterPro"/>
</dbReference>
<dbReference type="CDD" id="cd16893">
    <property type="entry name" value="LT_MltC_MltE"/>
    <property type="match status" value="1"/>
</dbReference>
<dbReference type="Gene3D" id="1.10.530.10">
    <property type="match status" value="1"/>
</dbReference>
<dbReference type="HAMAP" id="MF_01381">
    <property type="entry name" value="EmtA"/>
    <property type="match status" value="1"/>
</dbReference>
<dbReference type="InterPro" id="IPR023946">
    <property type="entry name" value="EmtA"/>
</dbReference>
<dbReference type="InterPro" id="IPR023346">
    <property type="entry name" value="Lysozyme-like_dom_sf"/>
</dbReference>
<dbReference type="InterPro" id="IPR000189">
    <property type="entry name" value="Transglyc_AS"/>
</dbReference>
<dbReference type="InterPro" id="IPR008258">
    <property type="entry name" value="Transglycosylase_SLT_dom_1"/>
</dbReference>
<dbReference type="NCBIfam" id="NF012014">
    <property type="entry name" value="PRK15470.1"/>
    <property type="match status" value="1"/>
</dbReference>
<dbReference type="PANTHER" id="PTHR37423:SF4">
    <property type="entry name" value="ENDO-TYPE MEMBRANE-BOUND LYTIC MUREIN TRANSGLYCOSYLASE A"/>
    <property type="match status" value="1"/>
</dbReference>
<dbReference type="PANTHER" id="PTHR37423">
    <property type="entry name" value="SOLUBLE LYTIC MUREIN TRANSGLYCOSYLASE-RELATED"/>
    <property type="match status" value="1"/>
</dbReference>
<dbReference type="Pfam" id="PF01464">
    <property type="entry name" value="SLT"/>
    <property type="match status" value="1"/>
</dbReference>
<dbReference type="SUPFAM" id="SSF53955">
    <property type="entry name" value="Lysozyme-like"/>
    <property type="match status" value="1"/>
</dbReference>
<dbReference type="PROSITE" id="PS51257">
    <property type="entry name" value="PROKAR_LIPOPROTEIN"/>
    <property type="match status" value="1"/>
</dbReference>
<dbReference type="PROSITE" id="PS00922">
    <property type="entry name" value="TRANSGLYCOSYLASE"/>
    <property type="match status" value="1"/>
</dbReference>
<gene>
    <name evidence="1" type="primary">emtA</name>
    <name type="synonym">mltE</name>
    <name type="ordered locus">KPN78578_22700</name>
    <name type="ORF">KPN_02305</name>
</gene>
<accession>A6TAW0</accession>
<feature type="signal peptide" evidence="1">
    <location>
        <begin position="1"/>
        <end position="15"/>
    </location>
</feature>
<feature type="chain" id="PRO_0000312909" description="Endo-type membrane-bound lytic murein transglycosylase A">
    <location>
        <begin position="16"/>
        <end position="203"/>
    </location>
</feature>
<feature type="lipid moiety-binding region" description="N-palmitoyl cysteine" evidence="1">
    <location>
        <position position="16"/>
    </location>
</feature>
<feature type="lipid moiety-binding region" description="S-diacylglycerol cysteine" evidence="1">
    <location>
        <position position="16"/>
    </location>
</feature>
<proteinExistence type="inferred from homology"/>
<name>EMTA_KLEP7</name>